<dbReference type="EC" id="2.4.2.43" evidence="1"/>
<dbReference type="EMBL" id="CP000094">
    <property type="protein sequence ID" value="ABA74576.1"/>
    <property type="molecule type" value="Genomic_DNA"/>
</dbReference>
<dbReference type="RefSeq" id="WP_011334247.1">
    <property type="nucleotide sequence ID" value="NC_007492.2"/>
</dbReference>
<dbReference type="SMR" id="Q3KCC9"/>
<dbReference type="CAZy" id="GT83">
    <property type="family name" value="Glycosyltransferase Family 83"/>
</dbReference>
<dbReference type="KEGG" id="pfo:Pfl01_2835"/>
<dbReference type="eggNOG" id="COG1807">
    <property type="taxonomic scope" value="Bacteria"/>
</dbReference>
<dbReference type="HOGENOM" id="CLU_019200_2_1_6"/>
<dbReference type="UniPathway" id="UPA00037"/>
<dbReference type="Proteomes" id="UP000002704">
    <property type="component" value="Chromosome"/>
</dbReference>
<dbReference type="GO" id="GO:0005886">
    <property type="term" value="C:plasma membrane"/>
    <property type="evidence" value="ECO:0007669"/>
    <property type="project" value="UniProtKB-SubCell"/>
</dbReference>
<dbReference type="GO" id="GO:0103015">
    <property type="term" value="F:4-amino-4-deoxy-L-arabinose transferase activity"/>
    <property type="evidence" value="ECO:0007669"/>
    <property type="project" value="UniProtKB-EC"/>
</dbReference>
<dbReference type="GO" id="GO:0000030">
    <property type="term" value="F:mannosyltransferase activity"/>
    <property type="evidence" value="ECO:0007669"/>
    <property type="project" value="InterPro"/>
</dbReference>
<dbReference type="GO" id="GO:0009245">
    <property type="term" value="P:lipid A biosynthetic process"/>
    <property type="evidence" value="ECO:0007669"/>
    <property type="project" value="UniProtKB-UniRule"/>
</dbReference>
<dbReference type="GO" id="GO:0009103">
    <property type="term" value="P:lipopolysaccharide biosynthetic process"/>
    <property type="evidence" value="ECO:0007669"/>
    <property type="project" value="UniProtKB-KW"/>
</dbReference>
<dbReference type="GO" id="GO:0006493">
    <property type="term" value="P:protein O-linked glycosylation"/>
    <property type="evidence" value="ECO:0007669"/>
    <property type="project" value="InterPro"/>
</dbReference>
<dbReference type="GO" id="GO:0010041">
    <property type="term" value="P:response to iron(III) ion"/>
    <property type="evidence" value="ECO:0007669"/>
    <property type="project" value="TreeGrafter"/>
</dbReference>
<dbReference type="HAMAP" id="MF_01165">
    <property type="entry name" value="ArnT_transfer"/>
    <property type="match status" value="1"/>
</dbReference>
<dbReference type="InterPro" id="IPR022839">
    <property type="entry name" value="ArnT_tfrase"/>
</dbReference>
<dbReference type="InterPro" id="IPR003342">
    <property type="entry name" value="Glyco_trans_39/83"/>
</dbReference>
<dbReference type="InterPro" id="IPR050297">
    <property type="entry name" value="LipidA_mod_glycosyltrf_83"/>
</dbReference>
<dbReference type="NCBIfam" id="NF009784">
    <property type="entry name" value="PRK13279.1"/>
    <property type="match status" value="1"/>
</dbReference>
<dbReference type="PANTHER" id="PTHR33908">
    <property type="entry name" value="MANNOSYLTRANSFERASE YKCB-RELATED"/>
    <property type="match status" value="1"/>
</dbReference>
<dbReference type="PANTHER" id="PTHR33908:SF3">
    <property type="entry name" value="UNDECAPRENYL PHOSPHATE-ALPHA-4-AMINO-4-DEOXY-L-ARABINOSE ARABINOSYL TRANSFERASE"/>
    <property type="match status" value="1"/>
</dbReference>
<dbReference type="Pfam" id="PF02366">
    <property type="entry name" value="PMT"/>
    <property type="match status" value="1"/>
</dbReference>
<gene>
    <name evidence="1" type="primary">arnT1</name>
    <name type="ordered locus">Pfl01_2835</name>
</gene>
<accession>Q3KCC9</accession>
<feature type="chain" id="PRO_0000380021" description="Undecaprenyl phosphate-alpha-4-amino-4-deoxy-L-arabinose arabinosyl transferase 1">
    <location>
        <begin position="1"/>
        <end position="569"/>
    </location>
</feature>
<feature type="transmembrane region" description="Helical" evidence="1">
    <location>
        <begin position="27"/>
        <end position="47"/>
    </location>
</feature>
<feature type="transmembrane region" description="Helical" evidence="1">
    <location>
        <begin position="98"/>
        <end position="120"/>
    </location>
</feature>
<feature type="transmembrane region" description="Helical" evidence="1">
    <location>
        <begin position="129"/>
        <end position="149"/>
    </location>
</feature>
<feature type="transmembrane region" description="Helical" evidence="1">
    <location>
        <begin position="151"/>
        <end position="171"/>
    </location>
</feature>
<feature type="transmembrane region" description="Helical" evidence="1">
    <location>
        <begin position="194"/>
        <end position="214"/>
    </location>
</feature>
<feature type="transmembrane region" description="Helical" evidence="1">
    <location>
        <begin position="225"/>
        <end position="245"/>
    </location>
</feature>
<feature type="transmembrane region" description="Helical" evidence="1">
    <location>
        <begin position="275"/>
        <end position="295"/>
    </location>
</feature>
<feature type="transmembrane region" description="Helical" evidence="1">
    <location>
        <begin position="311"/>
        <end position="331"/>
    </location>
</feature>
<feature type="transmembrane region" description="Helical" evidence="1">
    <location>
        <begin position="334"/>
        <end position="354"/>
    </location>
</feature>
<feature type="transmembrane region" description="Helical" evidence="1">
    <location>
        <begin position="366"/>
        <end position="386"/>
    </location>
</feature>
<feature type="transmembrane region" description="Helical" evidence="1">
    <location>
        <begin position="396"/>
        <end position="416"/>
    </location>
</feature>
<feature type="transmembrane region" description="Helical" evidence="1">
    <location>
        <begin position="420"/>
        <end position="440"/>
    </location>
</feature>
<keyword id="KW-0997">Cell inner membrane</keyword>
<keyword id="KW-1003">Cell membrane</keyword>
<keyword id="KW-0328">Glycosyltransferase</keyword>
<keyword id="KW-0441">Lipid A biosynthesis</keyword>
<keyword id="KW-0444">Lipid biosynthesis</keyword>
<keyword id="KW-0443">Lipid metabolism</keyword>
<keyword id="KW-0448">Lipopolysaccharide biosynthesis</keyword>
<keyword id="KW-0472">Membrane</keyword>
<keyword id="KW-0808">Transferase</keyword>
<keyword id="KW-0812">Transmembrane</keyword>
<keyword id="KW-1133">Transmembrane helix</keyword>
<name>ARNT1_PSEPF</name>
<reference key="1">
    <citation type="journal article" date="2009" name="Genome Biol.">
        <title>Genomic and genetic analyses of diversity and plant interactions of Pseudomonas fluorescens.</title>
        <authorList>
            <person name="Silby M.W."/>
            <person name="Cerdeno-Tarraga A.M."/>
            <person name="Vernikos G.S."/>
            <person name="Giddens S.R."/>
            <person name="Jackson R.W."/>
            <person name="Preston G.M."/>
            <person name="Zhang X.-X."/>
            <person name="Moon C.D."/>
            <person name="Gehrig S.M."/>
            <person name="Godfrey S.A.C."/>
            <person name="Knight C.G."/>
            <person name="Malone J.G."/>
            <person name="Robinson Z."/>
            <person name="Spiers A.J."/>
            <person name="Harris S."/>
            <person name="Challis G.L."/>
            <person name="Yaxley A.M."/>
            <person name="Harris D."/>
            <person name="Seeger K."/>
            <person name="Murphy L."/>
            <person name="Rutter S."/>
            <person name="Squares R."/>
            <person name="Quail M.A."/>
            <person name="Saunders E."/>
            <person name="Mavromatis K."/>
            <person name="Brettin T.S."/>
            <person name="Bentley S.D."/>
            <person name="Hothersall J."/>
            <person name="Stephens E."/>
            <person name="Thomas C.M."/>
            <person name="Parkhill J."/>
            <person name="Levy S.B."/>
            <person name="Rainey P.B."/>
            <person name="Thomson N.R."/>
        </authorList>
    </citation>
    <scope>NUCLEOTIDE SEQUENCE [LARGE SCALE GENOMIC DNA]</scope>
    <source>
        <strain>Pf0-1</strain>
    </source>
</reference>
<protein>
    <recommendedName>
        <fullName evidence="1">Undecaprenyl phosphate-alpha-4-amino-4-deoxy-L-arabinose arabinosyl transferase 1</fullName>
        <ecNumber evidence="1">2.4.2.43</ecNumber>
    </recommendedName>
    <alternativeName>
        <fullName evidence="1">4-amino-4-deoxy-L-arabinose lipid A transferase 1</fullName>
    </alternativeName>
    <alternativeName>
        <fullName evidence="1">Lipid IV(A) 4-amino-4-deoxy-L-arabinosyltransferase</fullName>
    </alternativeName>
    <alternativeName>
        <fullName evidence="1">Undecaprenyl phosphate-alpha-L-Ara4N transferase 1</fullName>
    </alternativeName>
</protein>
<organism>
    <name type="scientific">Pseudomonas fluorescens (strain Pf0-1)</name>
    <dbReference type="NCBI Taxonomy" id="205922"/>
    <lineage>
        <taxon>Bacteria</taxon>
        <taxon>Pseudomonadati</taxon>
        <taxon>Pseudomonadota</taxon>
        <taxon>Gammaproteobacteria</taxon>
        <taxon>Pseudomonadales</taxon>
        <taxon>Pseudomonadaceae</taxon>
        <taxon>Pseudomonas</taxon>
    </lineage>
</organism>
<evidence type="ECO:0000255" key="1">
    <source>
        <dbReference type="HAMAP-Rule" id="MF_01165"/>
    </source>
</evidence>
<comment type="function">
    <text evidence="1">Catalyzes the transfer of the L-Ara4N moiety of the glycolipid undecaprenyl phosphate-alpha-L-Ara4N to lipid A. The modified arabinose is attached to lipid A and is required for resistance to polymyxin and cationic antimicrobial peptides.</text>
</comment>
<comment type="catalytic activity">
    <reaction evidence="1">
        <text>4-amino-4-deoxy-alpha-L-arabinopyranosyl di-trans,octa-cis-undecaprenyl phosphate + lipid IVA = lipid IIA + di-trans,octa-cis-undecaprenyl phosphate.</text>
        <dbReference type="EC" id="2.4.2.43"/>
    </reaction>
</comment>
<comment type="pathway">
    <text evidence="1">Lipopolysaccharide metabolism; 4-amino-4-deoxy-beta-L-arabinose-lipid A biosynthesis.</text>
</comment>
<comment type="subcellular location">
    <subcellularLocation>
        <location evidence="1">Cell inner membrane</location>
        <topology evidence="1">Multi-pass membrane protein</topology>
    </subcellularLocation>
</comment>
<comment type="similarity">
    <text evidence="1">Belongs to the glycosyltransferase 83 family.</text>
</comment>
<sequence>MTSENNPLRHTALFPSTTAVERWAIPGLILAFVMFYLLPLMSHGLWIPDETRYGQISQEMLLSGNWVAPHFMGIRYFEKPIAGYWMIAIGQAIFGDNLFGVRIASALSTGVSVWLTYLLARRLWNNPRINAASALLYMSFGLIAGQAGYANLDPQFTLWVNLSMVAVWFAIDNRTPRARLGGWALLGVACGMGLMTKGFLALLLPVLIALPYMLWQRRFGELVRYGLVAVVVCALVSLPWVLAVHYREPDFWRFFFWHEHIRRFAAGDDAQHARPWWFYLPLLFASTLPWALLLPSTLLRMWREKREAKMAYLALWFLLPLAFFSLSSGKLPTYIMPCLLPVALLMGQTVVKWLDQRSGRFLRLNGVFNTVLASVALVALLYLQATKEIYENTEMFSLSLAYIVVVGWIIANALQVLRPLTLWAMPALGIGLLVALLPAAMPAQIVNSKMPDQFIAEHQRELSETASLLSNDLGAASALAWRLKRPQVDLFNTIGELKYGLEDPAMEARKVTMDGVGQWMTEARKKGAVGVVLRVNSTQEEQEVELLPVDGKHYRRGNLHIFIFAQKQP</sequence>
<proteinExistence type="inferred from homology"/>